<gene>
    <name evidence="1" type="primary">ligA</name>
</gene>
<protein>
    <recommendedName>
        <fullName evidence="1">DNA ligase</fullName>
        <ecNumber evidence="1">6.5.1.2</ecNumber>
    </recommendedName>
    <alternativeName>
        <fullName evidence="1">Polydeoxyribonucleotide synthase [NAD(+)]</fullName>
    </alternativeName>
</protein>
<reference key="1">
    <citation type="journal article" date="1999" name="Nucleic Acids Res.">
        <title>Biochemical properties of a high fidelity DNA ligase from Thermus species AK16D.</title>
        <authorList>
            <person name="Tong J."/>
            <person name="Cao W."/>
            <person name="Barany F."/>
        </authorList>
    </citation>
    <scope>NUCLEOTIDE SEQUENCE [GENOMIC DNA]</scope>
</reference>
<dbReference type="EC" id="6.5.1.2" evidence="1"/>
<dbReference type="EMBL" id="AF092862">
    <property type="protein sequence ID" value="AAD13188.1"/>
    <property type="molecule type" value="Genomic_DNA"/>
</dbReference>
<dbReference type="SMR" id="Q9ZFY8"/>
<dbReference type="GO" id="GO:0005829">
    <property type="term" value="C:cytosol"/>
    <property type="evidence" value="ECO:0007669"/>
    <property type="project" value="TreeGrafter"/>
</dbReference>
<dbReference type="GO" id="GO:0003677">
    <property type="term" value="F:DNA binding"/>
    <property type="evidence" value="ECO:0007669"/>
    <property type="project" value="InterPro"/>
</dbReference>
<dbReference type="GO" id="GO:0003911">
    <property type="term" value="F:DNA ligase (NAD+) activity"/>
    <property type="evidence" value="ECO:0007669"/>
    <property type="project" value="UniProtKB-UniRule"/>
</dbReference>
<dbReference type="GO" id="GO:0046872">
    <property type="term" value="F:metal ion binding"/>
    <property type="evidence" value="ECO:0007669"/>
    <property type="project" value="UniProtKB-KW"/>
</dbReference>
<dbReference type="GO" id="GO:0006281">
    <property type="term" value="P:DNA repair"/>
    <property type="evidence" value="ECO:0007669"/>
    <property type="project" value="UniProtKB-KW"/>
</dbReference>
<dbReference type="GO" id="GO:0006260">
    <property type="term" value="P:DNA replication"/>
    <property type="evidence" value="ECO:0007669"/>
    <property type="project" value="UniProtKB-KW"/>
</dbReference>
<dbReference type="CDD" id="cd17748">
    <property type="entry name" value="BRCT_DNA_ligase_like"/>
    <property type="match status" value="1"/>
</dbReference>
<dbReference type="CDD" id="cd00114">
    <property type="entry name" value="LIGANc"/>
    <property type="match status" value="1"/>
</dbReference>
<dbReference type="FunFam" id="1.10.150.20:FF:000007">
    <property type="entry name" value="DNA ligase"/>
    <property type="match status" value="1"/>
</dbReference>
<dbReference type="FunFam" id="1.10.287.610:FF:000002">
    <property type="entry name" value="DNA ligase"/>
    <property type="match status" value="1"/>
</dbReference>
<dbReference type="FunFam" id="2.40.50.140:FF:000012">
    <property type="entry name" value="DNA ligase"/>
    <property type="match status" value="1"/>
</dbReference>
<dbReference type="FunFam" id="3.30.470.30:FF:000001">
    <property type="entry name" value="DNA ligase"/>
    <property type="match status" value="1"/>
</dbReference>
<dbReference type="Gene3D" id="3.30.1490.70">
    <property type="match status" value="1"/>
</dbReference>
<dbReference type="Gene3D" id="6.20.10.30">
    <property type="match status" value="1"/>
</dbReference>
<dbReference type="Gene3D" id="1.10.150.20">
    <property type="entry name" value="5' to 3' exonuclease, C-terminal subdomain"/>
    <property type="match status" value="2"/>
</dbReference>
<dbReference type="Gene3D" id="3.40.50.10190">
    <property type="entry name" value="BRCT domain"/>
    <property type="match status" value="1"/>
</dbReference>
<dbReference type="Gene3D" id="3.30.470.30">
    <property type="entry name" value="DNA ligase/mRNA capping enzyme"/>
    <property type="match status" value="1"/>
</dbReference>
<dbReference type="Gene3D" id="1.10.287.610">
    <property type="entry name" value="Helix hairpin bin"/>
    <property type="match status" value="1"/>
</dbReference>
<dbReference type="Gene3D" id="2.40.50.140">
    <property type="entry name" value="Nucleic acid-binding proteins"/>
    <property type="match status" value="1"/>
</dbReference>
<dbReference type="HAMAP" id="MF_01588">
    <property type="entry name" value="DNA_ligase_A"/>
    <property type="match status" value="1"/>
</dbReference>
<dbReference type="InterPro" id="IPR001357">
    <property type="entry name" value="BRCT_dom"/>
</dbReference>
<dbReference type="InterPro" id="IPR036420">
    <property type="entry name" value="BRCT_dom_sf"/>
</dbReference>
<dbReference type="InterPro" id="IPR041663">
    <property type="entry name" value="DisA/LigA_HHH"/>
</dbReference>
<dbReference type="InterPro" id="IPR001679">
    <property type="entry name" value="DNA_ligase"/>
</dbReference>
<dbReference type="InterPro" id="IPR018239">
    <property type="entry name" value="DNA_ligase_AS"/>
</dbReference>
<dbReference type="InterPro" id="IPR033136">
    <property type="entry name" value="DNA_ligase_CS"/>
</dbReference>
<dbReference type="InterPro" id="IPR013839">
    <property type="entry name" value="DNAligase_adenylation"/>
</dbReference>
<dbReference type="InterPro" id="IPR013840">
    <property type="entry name" value="DNAligase_N"/>
</dbReference>
<dbReference type="InterPro" id="IPR003583">
    <property type="entry name" value="Hlx-hairpin-Hlx_DNA-bd_motif"/>
</dbReference>
<dbReference type="InterPro" id="IPR012340">
    <property type="entry name" value="NA-bd_OB-fold"/>
</dbReference>
<dbReference type="InterPro" id="IPR004150">
    <property type="entry name" value="NAD_DNA_ligase_OB"/>
</dbReference>
<dbReference type="InterPro" id="IPR010994">
    <property type="entry name" value="RuvA_2-like"/>
</dbReference>
<dbReference type="NCBIfam" id="TIGR00575">
    <property type="entry name" value="dnlj"/>
    <property type="match status" value="1"/>
</dbReference>
<dbReference type="NCBIfam" id="NF005932">
    <property type="entry name" value="PRK07956.1"/>
    <property type="match status" value="1"/>
</dbReference>
<dbReference type="PANTHER" id="PTHR23389">
    <property type="entry name" value="CHROMOSOME TRANSMISSION FIDELITY FACTOR 18"/>
    <property type="match status" value="1"/>
</dbReference>
<dbReference type="PANTHER" id="PTHR23389:SF9">
    <property type="entry name" value="DNA LIGASE"/>
    <property type="match status" value="1"/>
</dbReference>
<dbReference type="Pfam" id="PF00533">
    <property type="entry name" value="BRCT"/>
    <property type="match status" value="1"/>
</dbReference>
<dbReference type="Pfam" id="PF01653">
    <property type="entry name" value="DNA_ligase_aden"/>
    <property type="match status" value="1"/>
</dbReference>
<dbReference type="Pfam" id="PF03120">
    <property type="entry name" value="DNA_ligase_OB"/>
    <property type="match status" value="1"/>
</dbReference>
<dbReference type="Pfam" id="PF12826">
    <property type="entry name" value="HHH_2"/>
    <property type="match status" value="1"/>
</dbReference>
<dbReference type="Pfam" id="PF14520">
    <property type="entry name" value="HHH_5"/>
    <property type="match status" value="1"/>
</dbReference>
<dbReference type="Pfam" id="PF22745">
    <property type="entry name" value="Nlig-Ia"/>
    <property type="match status" value="1"/>
</dbReference>
<dbReference type="PIRSF" id="PIRSF001604">
    <property type="entry name" value="LigA"/>
    <property type="match status" value="1"/>
</dbReference>
<dbReference type="SMART" id="SM00292">
    <property type="entry name" value="BRCT"/>
    <property type="match status" value="1"/>
</dbReference>
<dbReference type="SMART" id="SM00278">
    <property type="entry name" value="HhH1"/>
    <property type="match status" value="4"/>
</dbReference>
<dbReference type="SMART" id="SM00532">
    <property type="entry name" value="LIGANc"/>
    <property type="match status" value="1"/>
</dbReference>
<dbReference type="SUPFAM" id="SSF52113">
    <property type="entry name" value="BRCT domain"/>
    <property type="match status" value="1"/>
</dbReference>
<dbReference type="SUPFAM" id="SSF56091">
    <property type="entry name" value="DNA ligase/mRNA capping enzyme, catalytic domain"/>
    <property type="match status" value="1"/>
</dbReference>
<dbReference type="SUPFAM" id="SSF50249">
    <property type="entry name" value="Nucleic acid-binding proteins"/>
    <property type="match status" value="1"/>
</dbReference>
<dbReference type="SUPFAM" id="SSF47781">
    <property type="entry name" value="RuvA domain 2-like"/>
    <property type="match status" value="1"/>
</dbReference>
<dbReference type="PROSITE" id="PS50172">
    <property type="entry name" value="BRCT"/>
    <property type="match status" value="1"/>
</dbReference>
<dbReference type="PROSITE" id="PS01055">
    <property type="entry name" value="DNA_LIGASE_N1"/>
    <property type="match status" value="1"/>
</dbReference>
<dbReference type="PROSITE" id="PS01056">
    <property type="entry name" value="DNA_LIGASE_N2"/>
    <property type="match status" value="1"/>
</dbReference>
<keyword id="KW-0227">DNA damage</keyword>
<keyword id="KW-0234">DNA repair</keyword>
<keyword id="KW-0235">DNA replication</keyword>
<keyword id="KW-0436">Ligase</keyword>
<keyword id="KW-0460">Magnesium</keyword>
<keyword id="KW-0464">Manganese</keyword>
<keyword id="KW-0479">Metal-binding</keyword>
<keyword id="KW-0520">NAD</keyword>
<keyword id="KW-0862">Zinc</keyword>
<proteinExistence type="inferred from homology"/>
<name>DNLJ_THESK</name>
<organism>
    <name type="scientific">Thermus sp. (strain AK16D)</name>
    <dbReference type="NCBI Taxonomy" id="88009"/>
    <lineage>
        <taxon>Bacteria</taxon>
        <taxon>Thermotogati</taxon>
        <taxon>Deinococcota</taxon>
        <taxon>Deinococci</taxon>
        <taxon>Thermales</taxon>
        <taxon>Thermaceae</taxon>
        <taxon>Thermus</taxon>
    </lineage>
</organism>
<accession>Q9ZFY8</accession>
<evidence type="ECO:0000255" key="1">
    <source>
        <dbReference type="HAMAP-Rule" id="MF_01588"/>
    </source>
</evidence>
<comment type="function">
    <text evidence="1">DNA ligase that catalyzes the formation of phosphodiester linkages between 5'-phosphoryl and 3'-hydroxyl groups in double-stranded DNA using NAD as a coenzyme and as the energy source for the reaction. It is essential for DNA replication and repair of damaged DNA.</text>
</comment>
<comment type="catalytic activity">
    <reaction evidence="1">
        <text>NAD(+) + (deoxyribonucleotide)n-3'-hydroxyl + 5'-phospho-(deoxyribonucleotide)m = (deoxyribonucleotide)n+m + AMP + beta-nicotinamide D-nucleotide.</text>
        <dbReference type="EC" id="6.5.1.2"/>
    </reaction>
</comment>
<comment type="cofactor">
    <cofactor evidence="1">
        <name>Mg(2+)</name>
        <dbReference type="ChEBI" id="CHEBI:18420"/>
    </cofactor>
    <cofactor evidence="1">
        <name>Mn(2+)</name>
        <dbReference type="ChEBI" id="CHEBI:29035"/>
    </cofactor>
</comment>
<comment type="similarity">
    <text evidence="1">Belongs to the NAD-dependent DNA ligase family. LigA subfamily.</text>
</comment>
<feature type="chain" id="PRO_0000161771" description="DNA ligase">
    <location>
        <begin position="1"/>
        <end position="674"/>
    </location>
</feature>
<feature type="domain" description="BRCT" evidence="1">
    <location>
        <begin position="586"/>
        <end position="674"/>
    </location>
</feature>
<feature type="active site" description="N6-AMP-lysine intermediate" evidence="1">
    <location>
        <position position="118"/>
    </location>
</feature>
<feature type="binding site" evidence="1">
    <location>
        <begin position="34"/>
        <end position="38"/>
    </location>
    <ligand>
        <name>NAD(+)</name>
        <dbReference type="ChEBI" id="CHEBI:57540"/>
    </ligand>
</feature>
<feature type="binding site" evidence="1">
    <location>
        <begin position="84"/>
        <end position="85"/>
    </location>
    <ligand>
        <name>NAD(+)</name>
        <dbReference type="ChEBI" id="CHEBI:57540"/>
    </ligand>
</feature>
<feature type="binding site" evidence="1">
    <location>
        <position position="116"/>
    </location>
    <ligand>
        <name>NAD(+)</name>
        <dbReference type="ChEBI" id="CHEBI:57540"/>
    </ligand>
</feature>
<feature type="binding site" evidence="1">
    <location>
        <position position="139"/>
    </location>
    <ligand>
        <name>NAD(+)</name>
        <dbReference type="ChEBI" id="CHEBI:57540"/>
    </ligand>
</feature>
<feature type="binding site" evidence="1">
    <location>
        <position position="174"/>
    </location>
    <ligand>
        <name>NAD(+)</name>
        <dbReference type="ChEBI" id="CHEBI:57540"/>
    </ligand>
</feature>
<feature type="binding site" evidence="1">
    <location>
        <position position="291"/>
    </location>
    <ligand>
        <name>NAD(+)</name>
        <dbReference type="ChEBI" id="CHEBI:57540"/>
    </ligand>
</feature>
<feature type="binding site" evidence="1">
    <location>
        <position position="315"/>
    </location>
    <ligand>
        <name>NAD(+)</name>
        <dbReference type="ChEBI" id="CHEBI:57540"/>
    </ligand>
</feature>
<feature type="binding site" evidence="1">
    <location>
        <position position="409"/>
    </location>
    <ligand>
        <name>Zn(2+)</name>
        <dbReference type="ChEBI" id="CHEBI:29105"/>
    </ligand>
</feature>
<feature type="binding site" evidence="1">
    <location>
        <position position="412"/>
    </location>
    <ligand>
        <name>Zn(2+)</name>
        <dbReference type="ChEBI" id="CHEBI:29105"/>
    </ligand>
</feature>
<feature type="binding site" evidence="1">
    <location>
        <position position="425"/>
    </location>
    <ligand>
        <name>Zn(2+)</name>
        <dbReference type="ChEBI" id="CHEBI:29105"/>
    </ligand>
</feature>
<feature type="binding site" evidence="1">
    <location>
        <position position="430"/>
    </location>
    <ligand>
        <name>Zn(2+)</name>
        <dbReference type="ChEBI" id="CHEBI:29105"/>
    </ligand>
</feature>
<sequence length="674" mass="76589">MTLEEARRRVNELRDLIRYHNYLYYVLDAPEISDAEYDRLLRELKELEERFPELKSPDSPTEQVGARPLEATFRPVRHPTRMYSLDNAFSLDEVRAFEERIERALGRKGPFLYTVERKVDGLSVNLYYEEGILVFGATRGDGETGEEVTQNLLTIPTIPRRLTGVPDRLEVRGEVYMPIEAFLRLNQELEEAGERIFKNPRNAAAGSLRQKDPRVTARRGLRATFYALGLGLEETGLKSQHDLLLWLRERGFPVEHGFTRALGAEGVEEVYQAWLKERRKLPFEADGVVVKLDDLALWRELGYTARTPRFALAYKFPAEEKETRLLSVAFQVGRTGRITPVGVLEPVFIEGSEVSRVTLHNESFIEELDVRIGDWVLVHKAGGVIPEVLRVLKERRTGEEKPIIWPENCPECGHALIKEGKVHRCPNPLCPAKRFEAIRHYASRKAMDIQGLGEKLIEKLLEKGLVRDVADLYRLKKEDLVNLERMGEKSAENLLRQIEESKGRGLERLLYALGLPGVGEVLARNLALRFGHMDRLLEAGLEDLLEVEGVGELTARAILNTLKDPEFRDLVRRLKEAGVEMEAKEREGEALKGLTFVITGELSRPREEVKALLRRLGAKVTDSVSRKTSFLVVGENPGSKLEKARALGVPTLSEEELYRLIEERTGKDPRALTA</sequence>